<protein>
    <recommendedName>
        <fullName evidence="1">NADH-quinone oxidoreductase subunit A</fullName>
        <ecNumber evidence="1">7.1.1.-</ecNumber>
    </recommendedName>
    <alternativeName>
        <fullName evidence="1">NADH dehydrogenase I subunit A</fullName>
    </alternativeName>
    <alternativeName>
        <fullName evidence="1">NDH-1 subunit A</fullName>
    </alternativeName>
    <alternativeName>
        <fullName evidence="1">NUO1</fullName>
    </alternativeName>
</protein>
<keyword id="KW-0997">Cell inner membrane</keyword>
<keyword id="KW-1003">Cell membrane</keyword>
<keyword id="KW-0472">Membrane</keyword>
<keyword id="KW-0520">NAD</keyword>
<keyword id="KW-0874">Quinone</keyword>
<keyword id="KW-1278">Translocase</keyword>
<keyword id="KW-0812">Transmembrane</keyword>
<keyword id="KW-1133">Transmembrane helix</keyword>
<keyword id="KW-0813">Transport</keyword>
<keyword id="KW-0830">Ubiquinone</keyword>
<reference key="1">
    <citation type="journal article" date="2010" name="Genome Biol. Evol.">
        <title>Continuing evolution of Burkholderia mallei through genome reduction and large-scale rearrangements.</title>
        <authorList>
            <person name="Losada L."/>
            <person name="Ronning C.M."/>
            <person name="DeShazer D."/>
            <person name="Woods D."/>
            <person name="Fedorova N."/>
            <person name="Kim H.S."/>
            <person name="Shabalina S.A."/>
            <person name="Pearson T.R."/>
            <person name="Brinkac L."/>
            <person name="Tan P."/>
            <person name="Nandi T."/>
            <person name="Crabtree J."/>
            <person name="Badger J."/>
            <person name="Beckstrom-Sternberg S."/>
            <person name="Saqib M."/>
            <person name="Schutzer S.E."/>
            <person name="Keim P."/>
            <person name="Nierman W.C."/>
        </authorList>
    </citation>
    <scope>NUCLEOTIDE SEQUENCE [LARGE SCALE GENOMIC DNA]</scope>
    <source>
        <strain>NCTC 10229</strain>
    </source>
</reference>
<sequence length="119" mass="13513">MNLAAYYPVLLFLLVGTGLGIALVSIGKILGPNKPDSEKNAPYECGFEAFEDARMKFDVRYYLVAILFIIFDLETAFLFPWGVALREIGWPGFIAMMIFLLEFLLGFAYIWKKGGLDWE</sequence>
<organism>
    <name type="scientific">Burkholderia mallei (strain NCTC 10229)</name>
    <dbReference type="NCBI Taxonomy" id="412022"/>
    <lineage>
        <taxon>Bacteria</taxon>
        <taxon>Pseudomonadati</taxon>
        <taxon>Pseudomonadota</taxon>
        <taxon>Betaproteobacteria</taxon>
        <taxon>Burkholderiales</taxon>
        <taxon>Burkholderiaceae</taxon>
        <taxon>Burkholderia</taxon>
        <taxon>pseudomallei group</taxon>
    </lineage>
</organism>
<dbReference type="EC" id="7.1.1.-" evidence="1"/>
<dbReference type="EMBL" id="CP000546">
    <property type="protein sequence ID" value="ABN03520.1"/>
    <property type="molecule type" value="Genomic_DNA"/>
</dbReference>
<dbReference type="RefSeq" id="WP_004186624.1">
    <property type="nucleotide sequence ID" value="NC_008836.1"/>
</dbReference>
<dbReference type="SMR" id="A2S459"/>
<dbReference type="KEGG" id="bml:BMA10229_A0737"/>
<dbReference type="HOGENOM" id="CLU_119549_3_1_4"/>
<dbReference type="Proteomes" id="UP000002283">
    <property type="component" value="Chromosome I"/>
</dbReference>
<dbReference type="GO" id="GO:0030964">
    <property type="term" value="C:NADH dehydrogenase complex"/>
    <property type="evidence" value="ECO:0007669"/>
    <property type="project" value="TreeGrafter"/>
</dbReference>
<dbReference type="GO" id="GO:0005886">
    <property type="term" value="C:plasma membrane"/>
    <property type="evidence" value="ECO:0007669"/>
    <property type="project" value="UniProtKB-SubCell"/>
</dbReference>
<dbReference type="GO" id="GO:0008137">
    <property type="term" value="F:NADH dehydrogenase (ubiquinone) activity"/>
    <property type="evidence" value="ECO:0007669"/>
    <property type="project" value="InterPro"/>
</dbReference>
<dbReference type="GO" id="GO:0050136">
    <property type="term" value="F:NADH:ubiquinone reductase (non-electrogenic) activity"/>
    <property type="evidence" value="ECO:0007669"/>
    <property type="project" value="UniProtKB-UniRule"/>
</dbReference>
<dbReference type="GO" id="GO:0048038">
    <property type="term" value="F:quinone binding"/>
    <property type="evidence" value="ECO:0007669"/>
    <property type="project" value="UniProtKB-KW"/>
</dbReference>
<dbReference type="FunFam" id="1.20.58.1610:FF:000004">
    <property type="entry name" value="NADH-quinone oxidoreductase subunit A"/>
    <property type="match status" value="1"/>
</dbReference>
<dbReference type="Gene3D" id="1.20.58.1610">
    <property type="entry name" value="NADH:ubiquinone/plastoquinone oxidoreductase, chain 3"/>
    <property type="match status" value="1"/>
</dbReference>
<dbReference type="HAMAP" id="MF_01394">
    <property type="entry name" value="NDH1_NuoA"/>
    <property type="match status" value="1"/>
</dbReference>
<dbReference type="InterPro" id="IPR023043">
    <property type="entry name" value="NAD(P)H_OxRDtase_bac/plastid"/>
</dbReference>
<dbReference type="InterPro" id="IPR000440">
    <property type="entry name" value="NADH_UbQ/plastoQ_OxRdtase_su3"/>
</dbReference>
<dbReference type="InterPro" id="IPR038430">
    <property type="entry name" value="NDAH_ubi_oxred_su3_sf"/>
</dbReference>
<dbReference type="PANTHER" id="PTHR11058">
    <property type="entry name" value="NADH-UBIQUINONE OXIDOREDUCTASE CHAIN 3"/>
    <property type="match status" value="1"/>
</dbReference>
<dbReference type="PANTHER" id="PTHR11058:SF9">
    <property type="entry name" value="NADH-UBIQUINONE OXIDOREDUCTASE CHAIN 3"/>
    <property type="match status" value="1"/>
</dbReference>
<dbReference type="Pfam" id="PF00507">
    <property type="entry name" value="Oxidored_q4"/>
    <property type="match status" value="1"/>
</dbReference>
<gene>
    <name evidence="1" type="primary">nuoA</name>
    <name type="ordered locus">BMA10229_A0737</name>
</gene>
<comment type="function">
    <text evidence="1">NDH-1 shuttles electrons from NADH, via FMN and iron-sulfur (Fe-S) centers, to quinones in the respiratory chain. The immediate electron acceptor for the enzyme in this species is believed to be ubiquinone. Couples the redox reaction to proton translocation (for every two electrons transferred, four hydrogen ions are translocated across the cytoplasmic membrane), and thus conserves the redox energy in a proton gradient.</text>
</comment>
<comment type="catalytic activity">
    <reaction evidence="1">
        <text>a quinone + NADH + 5 H(+)(in) = a quinol + NAD(+) + 4 H(+)(out)</text>
        <dbReference type="Rhea" id="RHEA:57888"/>
        <dbReference type="ChEBI" id="CHEBI:15378"/>
        <dbReference type="ChEBI" id="CHEBI:24646"/>
        <dbReference type="ChEBI" id="CHEBI:57540"/>
        <dbReference type="ChEBI" id="CHEBI:57945"/>
        <dbReference type="ChEBI" id="CHEBI:132124"/>
    </reaction>
</comment>
<comment type="subunit">
    <text evidence="1">NDH-1 is composed of 14 different subunits. Subunits NuoA, H, J, K, L, M, N constitute the membrane sector of the complex.</text>
</comment>
<comment type="subcellular location">
    <subcellularLocation>
        <location evidence="1">Cell inner membrane</location>
        <topology evidence="1">Multi-pass membrane protein</topology>
    </subcellularLocation>
</comment>
<comment type="similarity">
    <text evidence="1">Belongs to the complex I subunit 3 family.</text>
</comment>
<proteinExistence type="inferred from homology"/>
<name>NUOA_BURM9</name>
<feature type="chain" id="PRO_0000362640" description="NADH-quinone oxidoreductase subunit A">
    <location>
        <begin position="1"/>
        <end position="119"/>
    </location>
</feature>
<feature type="transmembrane region" description="Helical" evidence="1">
    <location>
        <begin position="7"/>
        <end position="27"/>
    </location>
</feature>
<feature type="transmembrane region" description="Helical" evidence="1">
    <location>
        <begin position="63"/>
        <end position="83"/>
    </location>
</feature>
<feature type="transmembrane region" description="Helical" evidence="1">
    <location>
        <begin position="88"/>
        <end position="108"/>
    </location>
</feature>
<evidence type="ECO:0000255" key="1">
    <source>
        <dbReference type="HAMAP-Rule" id="MF_01394"/>
    </source>
</evidence>
<accession>A2S459</accession>